<comment type="subunit">
    <text evidence="1">Component of the small ribosomal subunit. Mature ribosomes consist of a small (40S) and a large (60S) subunit. The 40S subunit contains about 33 different proteins and 1 molecule of RNA (18S). The 60S subunit contains about 49 different proteins and 3 molecules of RNA (28S, 5.8S and 5S).</text>
</comment>
<comment type="subcellular location">
    <subcellularLocation>
        <location evidence="1">Cytoplasm</location>
    </subcellularLocation>
</comment>
<comment type="similarity">
    <text evidence="1">Belongs to the eukaryotic ribosomal protein eS1 family.</text>
</comment>
<reference key="1">
    <citation type="journal article" date="1994" name="Eur. J. Biochem.">
        <title>Analysis of genes encoding highly conserved lysine-rich proteins in Aplysia californica and Saccharomyces cerevisiae.</title>
        <authorList>
            <person name="Auclair D."/>
            <person name="Lang B.L."/>
            <person name="Desgroseillers L."/>
            <person name="Forest P."/>
        </authorList>
    </citation>
    <scope>NUCLEOTIDE SEQUENCE [GENOMIC DNA]</scope>
    <source>
        <tissue>Neuron</tissue>
    </source>
</reference>
<proteinExistence type="inferred from homology"/>
<organism>
    <name type="scientific">Aplysia californica</name>
    <name type="common">California sea hare</name>
    <dbReference type="NCBI Taxonomy" id="6500"/>
    <lineage>
        <taxon>Eukaryota</taxon>
        <taxon>Metazoa</taxon>
        <taxon>Spiralia</taxon>
        <taxon>Lophotrochozoa</taxon>
        <taxon>Mollusca</taxon>
        <taxon>Gastropoda</taxon>
        <taxon>Heterobranchia</taxon>
        <taxon>Euthyneura</taxon>
        <taxon>Tectipleura</taxon>
        <taxon>Aplysiida</taxon>
        <taxon>Aplysioidea</taxon>
        <taxon>Aplysiidae</taxon>
        <taxon>Aplysia</taxon>
    </lineage>
</organism>
<name>RS3A_APLCA</name>
<keyword id="KW-0963">Cytoplasm</keyword>
<keyword id="KW-0687">Ribonucleoprotein</keyword>
<keyword id="KW-0689">Ribosomal protein</keyword>
<evidence type="ECO:0000255" key="1">
    <source>
        <dbReference type="HAMAP-Rule" id="MF_03122"/>
    </source>
</evidence>
<evidence type="ECO:0000256" key="2">
    <source>
        <dbReference type="SAM" id="MobiDB-lite"/>
    </source>
</evidence>
<evidence type="ECO:0000305" key="3"/>
<accession>P49395</accession>
<feature type="initiator methionine" description="Removed" evidence="1">
    <location>
        <position position="1"/>
    </location>
</feature>
<feature type="chain" id="PRO_0000153527" description="Small ribosomal subunit protein eS1">
    <location>
        <begin position="2"/>
        <end position="265"/>
    </location>
</feature>
<feature type="region of interest" description="Disordered" evidence="2">
    <location>
        <begin position="234"/>
        <end position="256"/>
    </location>
</feature>
<feature type="compositionally biased region" description="Basic and acidic residues" evidence="2">
    <location>
        <begin position="247"/>
        <end position="256"/>
    </location>
</feature>
<sequence length="265" mass="29660">MAVGKNKRLTKGGKKGAKKKVVDPFTKKEWYDVKAPSMFAVRQIGKTLVTRSQGTKIASDNLKGRVFEVSLADLQNDEVTFRKFKLIAEEVQGRNVLTNFSGMSLTRDKLCSMVKKWQTLIEANVDVKTTDGYLLRVFAIGFTKKRNNQVKKTCYAQHAQVKAIRKKMVEIVSREVSSNDMKEVVNKLIPDSIGKDIEKSCQGIYPLHDVLIHKVKVLKKPKFDVGKLMELHGEGSTTTSKGVTSEGGEKVDRVDGYEPPVLQNV</sequence>
<dbReference type="EMBL" id="X68555">
    <property type="protein sequence ID" value="CAA48558.1"/>
    <property type="molecule type" value="Genomic_DNA"/>
</dbReference>
<dbReference type="PIR" id="S43541">
    <property type="entry name" value="S43541"/>
</dbReference>
<dbReference type="SMR" id="P49395"/>
<dbReference type="OrthoDB" id="10250730at2759"/>
<dbReference type="Proteomes" id="UP000694888">
    <property type="component" value="Unplaced"/>
</dbReference>
<dbReference type="GO" id="GO:0022627">
    <property type="term" value="C:cytosolic small ribosomal subunit"/>
    <property type="evidence" value="ECO:0007669"/>
    <property type="project" value="UniProtKB-UniRule"/>
</dbReference>
<dbReference type="GO" id="GO:0003735">
    <property type="term" value="F:structural constituent of ribosome"/>
    <property type="evidence" value="ECO:0007669"/>
    <property type="project" value="UniProtKB-UniRule"/>
</dbReference>
<dbReference type="GO" id="GO:0006412">
    <property type="term" value="P:translation"/>
    <property type="evidence" value="ECO:0007669"/>
    <property type="project" value="UniProtKB-UniRule"/>
</dbReference>
<dbReference type="HAMAP" id="MF_03122">
    <property type="entry name" value="Ribosomal_eS1_euk"/>
    <property type="match status" value="1"/>
</dbReference>
<dbReference type="InterPro" id="IPR001593">
    <property type="entry name" value="Ribosomal_eS1"/>
</dbReference>
<dbReference type="InterPro" id="IPR018281">
    <property type="entry name" value="Ribosomal_eS1_CS"/>
</dbReference>
<dbReference type="InterPro" id="IPR027500">
    <property type="entry name" value="Ribosomal_eS1_euk"/>
</dbReference>
<dbReference type="PANTHER" id="PTHR11830">
    <property type="entry name" value="40S RIBOSOMAL PROTEIN S3A"/>
    <property type="match status" value="1"/>
</dbReference>
<dbReference type="Pfam" id="PF01015">
    <property type="entry name" value="Ribosomal_S3Ae"/>
    <property type="match status" value="1"/>
</dbReference>
<dbReference type="SMART" id="SM01397">
    <property type="entry name" value="Ribosomal_S3Ae"/>
    <property type="match status" value="1"/>
</dbReference>
<dbReference type="PROSITE" id="PS01191">
    <property type="entry name" value="RIBOSOMAL_S3AE"/>
    <property type="match status" value="1"/>
</dbReference>
<gene>
    <name evidence="1" type="primary">RPS3A</name>
    <name type="synonym">KRP-A</name>
</gene>
<protein>
    <recommendedName>
        <fullName evidence="1">Small ribosomal subunit protein eS1</fullName>
    </recommendedName>
    <alternativeName>
        <fullName evidence="3">40S ribosomal protein S3a</fullName>
    </alternativeName>
    <alternativeName>
        <fullName>Lysine-rich protein KRP-A</fullName>
    </alternativeName>
</protein>